<proteinExistence type="inferred from homology"/>
<keyword id="KW-0963">Cytoplasm</keyword>
<keyword id="KW-0378">Hydrolase</keyword>
<keyword id="KW-0479">Metal-binding</keyword>
<keyword id="KW-0533">Nickel</keyword>
<keyword id="KW-1185">Reference proteome</keyword>
<accession>Q18EB9</accession>
<organism>
    <name type="scientific">Haloquadratum walsbyi (strain DSM 16790 / HBSQ001)</name>
    <dbReference type="NCBI Taxonomy" id="362976"/>
    <lineage>
        <taxon>Archaea</taxon>
        <taxon>Methanobacteriati</taxon>
        <taxon>Methanobacteriota</taxon>
        <taxon>Stenosarchaea group</taxon>
        <taxon>Halobacteria</taxon>
        <taxon>Halobacteriales</taxon>
        <taxon>Haloferacaceae</taxon>
        <taxon>Haloquadratum</taxon>
    </lineage>
</organism>
<gene>
    <name evidence="1" type="primary">ureC</name>
    <name type="ordered locus">HQ_3626A</name>
</gene>
<reference key="1">
    <citation type="journal article" date="2006" name="BMC Genomics">
        <title>The genome of the square archaeon Haloquadratum walsbyi: life at the limits of water activity.</title>
        <authorList>
            <person name="Bolhuis H."/>
            <person name="Palm P."/>
            <person name="Wende A."/>
            <person name="Falb M."/>
            <person name="Rampp M."/>
            <person name="Rodriguez-Valera F."/>
            <person name="Pfeiffer F."/>
            <person name="Oesterhelt D."/>
        </authorList>
    </citation>
    <scope>NUCLEOTIDE SEQUENCE [LARGE SCALE GENOMIC DNA]</scope>
    <source>
        <strain>DSM 16790 / HBSQ001</strain>
    </source>
</reference>
<feature type="chain" id="PRO_1000070660" description="Urease subunit alpha">
    <location>
        <begin position="1"/>
        <end position="570"/>
    </location>
</feature>
<feature type="domain" description="Urease" evidence="1">
    <location>
        <begin position="135"/>
        <end position="570"/>
    </location>
</feature>
<feature type="active site" description="Proton donor" evidence="1">
    <location>
        <position position="322"/>
    </location>
</feature>
<feature type="binding site" evidence="1">
    <location>
        <position position="140"/>
    </location>
    <ligand>
        <name>Ni(2+)</name>
        <dbReference type="ChEBI" id="CHEBI:49786"/>
        <label>1</label>
    </ligand>
</feature>
<feature type="binding site" evidence="1">
    <location>
        <position position="142"/>
    </location>
    <ligand>
        <name>Ni(2+)</name>
        <dbReference type="ChEBI" id="CHEBI:49786"/>
        <label>1</label>
    </ligand>
</feature>
<feature type="binding site" description="via carbamate group" evidence="1">
    <location>
        <position position="219"/>
    </location>
    <ligand>
        <name>Ni(2+)</name>
        <dbReference type="ChEBI" id="CHEBI:49786"/>
        <label>1</label>
    </ligand>
</feature>
<feature type="binding site" description="via carbamate group" evidence="1">
    <location>
        <position position="219"/>
    </location>
    <ligand>
        <name>Ni(2+)</name>
        <dbReference type="ChEBI" id="CHEBI:49786"/>
        <label>2</label>
    </ligand>
</feature>
<feature type="binding site" evidence="1">
    <location>
        <position position="221"/>
    </location>
    <ligand>
        <name>substrate</name>
    </ligand>
</feature>
<feature type="binding site" evidence="1">
    <location>
        <position position="248"/>
    </location>
    <ligand>
        <name>Ni(2+)</name>
        <dbReference type="ChEBI" id="CHEBI:49786"/>
        <label>2</label>
    </ligand>
</feature>
<feature type="binding site" evidence="1">
    <location>
        <position position="274"/>
    </location>
    <ligand>
        <name>Ni(2+)</name>
        <dbReference type="ChEBI" id="CHEBI:49786"/>
        <label>2</label>
    </ligand>
</feature>
<feature type="binding site" evidence="1">
    <location>
        <position position="362"/>
    </location>
    <ligand>
        <name>Ni(2+)</name>
        <dbReference type="ChEBI" id="CHEBI:49786"/>
        <label>1</label>
    </ligand>
</feature>
<feature type="modified residue" description="N6-carboxylysine" evidence="1">
    <location>
        <position position="219"/>
    </location>
</feature>
<dbReference type="EC" id="3.5.1.5" evidence="1"/>
<dbReference type="EMBL" id="AM180088">
    <property type="protein sequence ID" value="CAJ53714.1"/>
    <property type="molecule type" value="Genomic_DNA"/>
</dbReference>
<dbReference type="RefSeq" id="WP_011572796.1">
    <property type="nucleotide sequence ID" value="NC_008212.1"/>
</dbReference>
<dbReference type="SMR" id="Q18EB9"/>
<dbReference type="STRING" id="362976.HQ_3626A"/>
<dbReference type="GeneID" id="4194898"/>
<dbReference type="KEGG" id="hwa:HQ_3626A"/>
<dbReference type="eggNOG" id="arCOG00698">
    <property type="taxonomic scope" value="Archaea"/>
</dbReference>
<dbReference type="HOGENOM" id="CLU_000980_0_0_2"/>
<dbReference type="UniPathway" id="UPA00258">
    <property type="reaction ID" value="UER00370"/>
</dbReference>
<dbReference type="Proteomes" id="UP000001975">
    <property type="component" value="Chromosome"/>
</dbReference>
<dbReference type="GO" id="GO:0005737">
    <property type="term" value="C:cytoplasm"/>
    <property type="evidence" value="ECO:0007669"/>
    <property type="project" value="UniProtKB-SubCell"/>
</dbReference>
<dbReference type="GO" id="GO:0016151">
    <property type="term" value="F:nickel cation binding"/>
    <property type="evidence" value="ECO:0007669"/>
    <property type="project" value="UniProtKB-UniRule"/>
</dbReference>
<dbReference type="GO" id="GO:0009039">
    <property type="term" value="F:urease activity"/>
    <property type="evidence" value="ECO:0007669"/>
    <property type="project" value="UniProtKB-UniRule"/>
</dbReference>
<dbReference type="GO" id="GO:0043419">
    <property type="term" value="P:urea catabolic process"/>
    <property type="evidence" value="ECO:0007669"/>
    <property type="project" value="UniProtKB-UniRule"/>
</dbReference>
<dbReference type="CDD" id="cd00375">
    <property type="entry name" value="Urease_alpha"/>
    <property type="match status" value="1"/>
</dbReference>
<dbReference type="Gene3D" id="3.20.20.140">
    <property type="entry name" value="Metal-dependent hydrolases"/>
    <property type="match status" value="1"/>
</dbReference>
<dbReference type="Gene3D" id="2.30.40.10">
    <property type="entry name" value="Urease, subunit C, domain 1"/>
    <property type="match status" value="1"/>
</dbReference>
<dbReference type="HAMAP" id="MF_01953">
    <property type="entry name" value="Urease_alpha"/>
    <property type="match status" value="1"/>
</dbReference>
<dbReference type="InterPro" id="IPR006680">
    <property type="entry name" value="Amidohydro-rel"/>
</dbReference>
<dbReference type="InterPro" id="IPR011059">
    <property type="entry name" value="Metal-dep_hydrolase_composite"/>
</dbReference>
<dbReference type="InterPro" id="IPR032466">
    <property type="entry name" value="Metal_Hydrolase"/>
</dbReference>
<dbReference type="InterPro" id="IPR011612">
    <property type="entry name" value="Urease_alpha_N_dom"/>
</dbReference>
<dbReference type="InterPro" id="IPR050112">
    <property type="entry name" value="Urease_alpha_subunit"/>
</dbReference>
<dbReference type="InterPro" id="IPR017950">
    <property type="entry name" value="Urease_AS"/>
</dbReference>
<dbReference type="InterPro" id="IPR005848">
    <property type="entry name" value="Urease_asu"/>
</dbReference>
<dbReference type="InterPro" id="IPR017951">
    <property type="entry name" value="Urease_asu_c"/>
</dbReference>
<dbReference type="NCBIfam" id="NF009686">
    <property type="entry name" value="PRK13207.1"/>
    <property type="match status" value="1"/>
</dbReference>
<dbReference type="NCBIfam" id="TIGR01792">
    <property type="entry name" value="urease_alph"/>
    <property type="match status" value="1"/>
</dbReference>
<dbReference type="PANTHER" id="PTHR43440">
    <property type="entry name" value="UREASE"/>
    <property type="match status" value="1"/>
</dbReference>
<dbReference type="PANTHER" id="PTHR43440:SF1">
    <property type="entry name" value="UREASE"/>
    <property type="match status" value="1"/>
</dbReference>
<dbReference type="Pfam" id="PF01979">
    <property type="entry name" value="Amidohydro_1"/>
    <property type="match status" value="1"/>
</dbReference>
<dbReference type="Pfam" id="PF00449">
    <property type="entry name" value="Urease_alpha"/>
    <property type="match status" value="1"/>
</dbReference>
<dbReference type="PRINTS" id="PR01752">
    <property type="entry name" value="UREASE"/>
</dbReference>
<dbReference type="SUPFAM" id="SSF51338">
    <property type="entry name" value="Composite domain of metallo-dependent hydrolases"/>
    <property type="match status" value="2"/>
</dbReference>
<dbReference type="SUPFAM" id="SSF51556">
    <property type="entry name" value="Metallo-dependent hydrolases"/>
    <property type="match status" value="1"/>
</dbReference>
<dbReference type="PROSITE" id="PS00145">
    <property type="entry name" value="UREASE_2"/>
    <property type="match status" value="1"/>
</dbReference>
<dbReference type="PROSITE" id="PS51368">
    <property type="entry name" value="UREASE_3"/>
    <property type="match status" value="1"/>
</dbReference>
<comment type="catalytic activity">
    <reaction evidence="1">
        <text>urea + 2 H2O + H(+) = hydrogencarbonate + 2 NH4(+)</text>
        <dbReference type="Rhea" id="RHEA:20557"/>
        <dbReference type="ChEBI" id="CHEBI:15377"/>
        <dbReference type="ChEBI" id="CHEBI:15378"/>
        <dbReference type="ChEBI" id="CHEBI:16199"/>
        <dbReference type="ChEBI" id="CHEBI:17544"/>
        <dbReference type="ChEBI" id="CHEBI:28938"/>
        <dbReference type="EC" id="3.5.1.5"/>
    </reaction>
</comment>
<comment type="cofactor">
    <cofactor evidence="1">
        <name>Ni cation</name>
        <dbReference type="ChEBI" id="CHEBI:25516"/>
    </cofactor>
    <text evidence="1">Binds 2 nickel ions per subunit.</text>
</comment>
<comment type="pathway">
    <text evidence="1">Nitrogen metabolism; urea degradation; CO(2) and NH(3) from urea (urease route): step 1/1.</text>
</comment>
<comment type="subunit">
    <text evidence="1">Heterotrimer of UreA (gamma), UreB (beta) and UreC (alpha) subunits. Three heterotrimers associate to form the active enzyme.</text>
</comment>
<comment type="subcellular location">
    <subcellularLocation>
        <location evidence="1">Cytoplasm</location>
    </subcellularLocation>
</comment>
<comment type="PTM">
    <text evidence="1">Carboxylation allows a single lysine to coordinate two nickel ions.</text>
</comment>
<comment type="similarity">
    <text evidence="1">Belongs to the metallo-dependent hydrolases superfamily. Urease alpha subunit family.</text>
</comment>
<protein>
    <recommendedName>
        <fullName evidence="1">Urease subunit alpha</fullName>
        <ecNumber evidence="1">3.5.1.5</ecNumber>
    </recommendedName>
    <alternativeName>
        <fullName evidence="1">Urea amidohydrolase subunit alpha</fullName>
    </alternativeName>
</protein>
<evidence type="ECO:0000255" key="1">
    <source>
        <dbReference type="HAMAP-Rule" id="MF_01953"/>
    </source>
</evidence>
<name>URE1_HALWD</name>
<sequence>MSRKLSREAYTDLFGATEGDRLRLGDTNLLAKIEKDHGTYGDEAVFGGGKTMRDGMGMQSGTTQAEGALDWVFSNAVIIDPILGIQKGDIGVRDGKIAGIGKAGNPDTMDGVDDELVIGPSTDTAPADGLIATPGGLDIHIHFNSKELFEHALASGVTTMFGGGYGGGATTCTTGPENIKRFLQAAEEYPVNVGFYAKGNSSGPDPIIEQIEAGACGLKLHEDWGSTPDVIDTALTVADEEDVQVCIHTDTLNESGFLEDTFEAIDGRTIHTFHIEGAGGGHAPDVLELIGYDHMLPSSTNPSMPYTVNTFDEHLDMVMVCHHLNPDVPEDVAFAESRIRSETIAAEDVLHDMGAISMMTSDSQAMGRMAEVITRTWQTAHKMKSQRGALPADRGTDADNARIKRYVAKYTINPAKVAGINEYVGSLEPGKMADIVLWEPEFYGIKPKYVIKGGFPVHSEMGEANGSLMTCEPVMQRSRMGAVGKAKHAISTTFVSKAAYENDIGDQIGLESRVRPVEGTRDVGKNDMRHNEYAPENIDIDPQTFEVAVDGEHVTCEPAEELPLAKRYSL</sequence>